<organism>
    <name type="scientific">Danio rerio</name>
    <name type="common">Zebrafish</name>
    <name type="synonym">Brachydanio rerio</name>
    <dbReference type="NCBI Taxonomy" id="7955"/>
    <lineage>
        <taxon>Eukaryota</taxon>
        <taxon>Metazoa</taxon>
        <taxon>Chordata</taxon>
        <taxon>Craniata</taxon>
        <taxon>Vertebrata</taxon>
        <taxon>Euteleostomi</taxon>
        <taxon>Actinopterygii</taxon>
        <taxon>Neopterygii</taxon>
        <taxon>Teleostei</taxon>
        <taxon>Ostariophysi</taxon>
        <taxon>Cypriniformes</taxon>
        <taxon>Danionidae</taxon>
        <taxon>Danioninae</taxon>
        <taxon>Danio</taxon>
    </lineage>
</organism>
<evidence type="ECO:0000250" key="1"/>
<evidence type="ECO:0000250" key="2">
    <source>
        <dbReference type="UniProtKB" id="Q05695"/>
    </source>
</evidence>
<evidence type="ECO:0000255" key="3"/>
<evidence type="ECO:0000255" key="4">
    <source>
        <dbReference type="PROSITE-ProRule" id="PRU00316"/>
    </source>
</evidence>
<evidence type="ECO:0000256" key="5">
    <source>
        <dbReference type="SAM" id="MobiDB-lite"/>
    </source>
</evidence>
<evidence type="ECO:0000269" key="6">
    <source>
    </source>
</evidence>
<evidence type="ECO:0000305" key="7"/>
<sequence>EFFIHYLRKDGPDKWEKSEKVNSTQSFYTLHGLQPGSQYRLKIDFNNTKWEQEIQTAGARVMEVKSGFVTESWFIGLISALVLLLLVLLILCFIKRSKGGKYSVKEKEEGQIDSEARPMNNEAFGEYRSLESDNEEKRTASQPSLCEDSKLCTDDGLDDYANSNSVQTEVIMDESLASQSSGVRDVPDAETQESSPLNPATAISHHGLPNSAALLD</sequence>
<accession>Q90479</accession>
<gene>
    <name type="primary">nadl1.2</name>
</gene>
<name>L1CA2_DANRE</name>
<protein>
    <recommendedName>
        <fullName>Neural cell adhesion molecule L1.2</fullName>
        <shortName>N-CAM-L1.2</shortName>
        <shortName>NCAM-L1.2</shortName>
    </recommendedName>
</protein>
<dbReference type="EMBL" id="X89205">
    <property type="protein sequence ID" value="CAA61491.1"/>
    <property type="molecule type" value="mRNA"/>
</dbReference>
<dbReference type="STRING" id="7955.ENSDARP00000005473"/>
<dbReference type="GlyCosmos" id="Q90479">
    <property type="glycosylation" value="2 sites, No reported glycans"/>
</dbReference>
<dbReference type="PaxDb" id="7955-ENSDARP00000094506"/>
<dbReference type="AGR" id="ZFIN:ZDB-GENE-990415-10"/>
<dbReference type="ZFIN" id="ZDB-GENE-990415-10">
    <property type="gene designation" value="l1cama"/>
</dbReference>
<dbReference type="eggNOG" id="KOG3513">
    <property type="taxonomic scope" value="Eukaryota"/>
</dbReference>
<dbReference type="InParanoid" id="Q90479"/>
<dbReference type="Proteomes" id="UP000000437">
    <property type="component" value="Unplaced"/>
</dbReference>
<dbReference type="GO" id="GO:0044295">
    <property type="term" value="C:axonal growth cone"/>
    <property type="evidence" value="ECO:0000250"/>
    <property type="project" value="UniProtKB"/>
</dbReference>
<dbReference type="GO" id="GO:0005886">
    <property type="term" value="C:plasma membrane"/>
    <property type="evidence" value="ECO:0007669"/>
    <property type="project" value="UniProtKB-SubCell"/>
</dbReference>
<dbReference type="GO" id="GO:0007155">
    <property type="term" value="P:cell adhesion"/>
    <property type="evidence" value="ECO:0007669"/>
    <property type="project" value="UniProtKB-KW"/>
</dbReference>
<dbReference type="GO" id="GO:0030154">
    <property type="term" value="P:cell differentiation"/>
    <property type="evidence" value="ECO:0007669"/>
    <property type="project" value="UniProtKB-KW"/>
</dbReference>
<dbReference type="GO" id="GO:0007399">
    <property type="term" value="P:nervous system development"/>
    <property type="evidence" value="ECO:0007669"/>
    <property type="project" value="UniProtKB-KW"/>
</dbReference>
<dbReference type="GO" id="GO:0045773">
    <property type="term" value="P:positive regulation of axon extension"/>
    <property type="evidence" value="ECO:0000250"/>
    <property type="project" value="UniProtKB"/>
</dbReference>
<dbReference type="CDD" id="cd00063">
    <property type="entry name" value="FN3"/>
    <property type="match status" value="1"/>
</dbReference>
<dbReference type="Gene3D" id="2.60.40.10">
    <property type="entry name" value="Immunoglobulins"/>
    <property type="match status" value="1"/>
</dbReference>
<dbReference type="InterPro" id="IPR003961">
    <property type="entry name" value="FN3_dom"/>
</dbReference>
<dbReference type="InterPro" id="IPR036116">
    <property type="entry name" value="FN3_sf"/>
</dbReference>
<dbReference type="InterPro" id="IPR013783">
    <property type="entry name" value="Ig-like_fold"/>
</dbReference>
<dbReference type="InterPro" id="IPR026966">
    <property type="entry name" value="Neurofascin/L1/NrCAM_C"/>
</dbReference>
<dbReference type="Pfam" id="PF13882">
    <property type="entry name" value="Bravo_FIGEY"/>
    <property type="match status" value="1"/>
</dbReference>
<dbReference type="SUPFAM" id="SSF49265">
    <property type="entry name" value="Fibronectin type III"/>
    <property type="match status" value="1"/>
</dbReference>
<dbReference type="PROSITE" id="PS50853">
    <property type="entry name" value="FN3"/>
    <property type="match status" value="1"/>
</dbReference>
<feature type="chain" id="PRO_0000072706" description="Neural cell adhesion molecule L1.2">
    <location>
        <begin position="1" status="less than"/>
        <end position="216"/>
    </location>
</feature>
<feature type="topological domain" description="Extracellular" evidence="3">
    <location>
        <begin position="1" status="less than"/>
        <end position="73"/>
    </location>
</feature>
<feature type="transmembrane region" description="Helical" evidence="3">
    <location>
        <begin position="74"/>
        <end position="94"/>
    </location>
</feature>
<feature type="topological domain" description="Cytoplasmic" evidence="3">
    <location>
        <begin position="95"/>
        <end position="216"/>
    </location>
</feature>
<feature type="domain" description="Fibronectin type-III" evidence="4">
    <location>
        <begin position="1" status="less than"/>
        <end position="64"/>
    </location>
</feature>
<feature type="region of interest" description="Disordered" evidence="5">
    <location>
        <begin position="127"/>
        <end position="149"/>
    </location>
</feature>
<feature type="region of interest" description="Disordered" evidence="5">
    <location>
        <begin position="173"/>
        <end position="216"/>
    </location>
</feature>
<feature type="compositionally biased region" description="Basic and acidic residues" evidence="5">
    <location>
        <begin position="128"/>
        <end position="139"/>
    </location>
</feature>
<feature type="glycosylation site" description="N-linked (GlcNAc...) asparagine" evidence="3">
    <location>
        <position position="22"/>
    </location>
</feature>
<feature type="glycosylation site" description="N-linked (GlcNAc...) asparagine" evidence="3">
    <location>
        <position position="46"/>
    </location>
</feature>
<feature type="non-terminal residue">
    <location>
        <position position="1"/>
    </location>
</feature>
<keyword id="KW-0130">Cell adhesion</keyword>
<keyword id="KW-1003">Cell membrane</keyword>
<keyword id="KW-0966">Cell projection</keyword>
<keyword id="KW-0217">Developmental protein</keyword>
<keyword id="KW-0221">Differentiation</keyword>
<keyword id="KW-0325">Glycoprotein</keyword>
<keyword id="KW-0472">Membrane</keyword>
<keyword id="KW-0524">Neurogenesis</keyword>
<keyword id="KW-1185">Reference proteome</keyword>
<keyword id="KW-0812">Transmembrane</keyword>
<keyword id="KW-1133">Transmembrane helix</keyword>
<reference key="1">
    <citation type="journal article" date="1995" name="J. Neurosci. Res.">
        <title>Zebrafish neurons express two L1-related molecules during early axonogenesis.</title>
        <authorList>
            <person name="Tongiorgi E."/>
            <person name="Bernhardt R.R."/>
            <person name="Schachner M."/>
        </authorList>
    </citation>
    <scope>NUCLEOTIDE SEQUENCE [MRNA]</scope>
    <scope>TISSUE SPECIFICITY</scope>
    <scope>DEVELOPMENTAL STAGE</scope>
    <source>
        <tissue>Embryo</tissue>
    </source>
</reference>
<comment type="function">
    <text evidence="1">Cell adhesion molecule with an important role in the development of the nervous system. Involved in neuron-neuron adhesion, neurite fasciculation, outgrowth of neurites, etc. Binds to axonin on neurons (By similarity).</text>
</comment>
<comment type="subcellular location">
    <subcellularLocation>
        <location>Cell membrane</location>
        <topology>Single-pass type I membrane protein</topology>
    </subcellularLocation>
    <subcellularLocation>
        <location evidence="2">Cell projection</location>
        <location evidence="2">Growth cone</location>
    </subcellularLocation>
</comment>
<comment type="tissue specificity">
    <text evidence="6">Expressed in many postmitotic neurons in 16-36 hours embryos. Little or no expression in the olfactory placode, the anterior lateral line/acoustic ganglia complex, the posterior lateral line ganglion, late-developing hindbrain neurons and some Rohon-Beard cells in the spinal cord.</text>
</comment>
<comment type="developmental stage">
    <text evidence="6">Onset of expression correlates with the initiation of axonogenesis in 16-36 hours embryos.</text>
</comment>
<comment type="similarity">
    <text evidence="7">Belongs to the immunoglobulin superfamily. L1/neurofascin/NgCAM family.</text>
</comment>
<proteinExistence type="evidence at transcript level"/>